<reference key="1">
    <citation type="journal article" date="2001" name="Nature">
        <title>Genome sequence of enterohaemorrhagic Escherichia coli O157:H7.</title>
        <authorList>
            <person name="Perna N.T."/>
            <person name="Plunkett G. III"/>
            <person name="Burland V."/>
            <person name="Mau B."/>
            <person name="Glasner J.D."/>
            <person name="Rose D.J."/>
            <person name="Mayhew G.F."/>
            <person name="Evans P.S."/>
            <person name="Gregor J."/>
            <person name="Kirkpatrick H.A."/>
            <person name="Posfai G."/>
            <person name="Hackett J."/>
            <person name="Klink S."/>
            <person name="Boutin A."/>
            <person name="Shao Y."/>
            <person name="Miller L."/>
            <person name="Grotbeck E.J."/>
            <person name="Davis N.W."/>
            <person name="Lim A."/>
            <person name="Dimalanta E.T."/>
            <person name="Potamousis K."/>
            <person name="Apodaca J."/>
            <person name="Anantharaman T.S."/>
            <person name="Lin J."/>
            <person name="Yen G."/>
            <person name="Schwartz D.C."/>
            <person name="Welch R.A."/>
            <person name="Blattner F.R."/>
        </authorList>
    </citation>
    <scope>NUCLEOTIDE SEQUENCE [LARGE SCALE GENOMIC DNA]</scope>
    <source>
        <strain>O157:H7 / EDL933 / ATCC 700927 / EHEC</strain>
    </source>
</reference>
<reference key="2">
    <citation type="journal article" date="2001" name="DNA Res.">
        <title>Complete genome sequence of enterohemorrhagic Escherichia coli O157:H7 and genomic comparison with a laboratory strain K-12.</title>
        <authorList>
            <person name="Hayashi T."/>
            <person name="Makino K."/>
            <person name="Ohnishi M."/>
            <person name="Kurokawa K."/>
            <person name="Ishii K."/>
            <person name="Yokoyama K."/>
            <person name="Han C.-G."/>
            <person name="Ohtsubo E."/>
            <person name="Nakayama K."/>
            <person name="Murata T."/>
            <person name="Tanaka M."/>
            <person name="Tobe T."/>
            <person name="Iida T."/>
            <person name="Takami H."/>
            <person name="Honda T."/>
            <person name="Sasakawa C."/>
            <person name="Ogasawara N."/>
            <person name="Yasunaga T."/>
            <person name="Kuhara S."/>
            <person name="Shiba T."/>
            <person name="Hattori M."/>
            <person name="Shinagawa H."/>
        </authorList>
    </citation>
    <scope>NUCLEOTIDE SEQUENCE [LARGE SCALE GENOMIC DNA]</scope>
    <source>
        <strain>O157:H7 / Sakai / RIMD 0509952 / EHEC</strain>
    </source>
</reference>
<protein>
    <recommendedName>
        <fullName evidence="1">GDP-mannose 4,6-dehydratase</fullName>
        <ecNumber evidence="1">4.2.1.47</ecNumber>
    </recommendedName>
    <alternativeName>
        <fullName evidence="1">GDP-D-mannose dehydratase</fullName>
    </alternativeName>
</protein>
<proteinExistence type="inferred from homology"/>
<dbReference type="EC" id="4.2.1.47" evidence="1"/>
<dbReference type="EMBL" id="AE005174">
    <property type="protein sequence ID" value="AAG57113.1"/>
    <property type="molecule type" value="Genomic_DNA"/>
</dbReference>
<dbReference type="EMBL" id="BA000007">
    <property type="protein sequence ID" value="BAB36281.1"/>
    <property type="molecule type" value="Genomic_DNA"/>
</dbReference>
<dbReference type="PIR" id="B90986">
    <property type="entry name" value="B90986"/>
</dbReference>
<dbReference type="PIR" id="E85831">
    <property type="entry name" value="E85831"/>
</dbReference>
<dbReference type="RefSeq" id="NP_310885.1">
    <property type="nucleotide sequence ID" value="NC_002695.1"/>
</dbReference>
<dbReference type="RefSeq" id="WP_000048190.1">
    <property type="nucleotide sequence ID" value="NZ_VOAI01000013.1"/>
</dbReference>
<dbReference type="SMR" id="P0AC90"/>
<dbReference type="STRING" id="155864.Z3217"/>
<dbReference type="GeneID" id="913961"/>
<dbReference type="GeneID" id="93775138"/>
<dbReference type="KEGG" id="ece:Z3217"/>
<dbReference type="KEGG" id="ecs:ECs_2858"/>
<dbReference type="PATRIC" id="fig|386585.9.peg.2991"/>
<dbReference type="eggNOG" id="COG1089">
    <property type="taxonomic scope" value="Bacteria"/>
</dbReference>
<dbReference type="HOGENOM" id="CLU_007383_14_0_6"/>
<dbReference type="OMA" id="HWQTVNY"/>
<dbReference type="BioCyc" id="MetaCyc:MONOMER-21548"/>
<dbReference type="UniPathway" id="UPA00128">
    <property type="reaction ID" value="UER00190"/>
</dbReference>
<dbReference type="Proteomes" id="UP000000558">
    <property type="component" value="Chromosome"/>
</dbReference>
<dbReference type="Proteomes" id="UP000002519">
    <property type="component" value="Chromosome"/>
</dbReference>
<dbReference type="GO" id="GO:0008446">
    <property type="term" value="F:GDP-mannose 4,6-dehydratase activity"/>
    <property type="evidence" value="ECO:0007669"/>
    <property type="project" value="UniProtKB-UniRule"/>
</dbReference>
<dbReference type="GO" id="GO:0070401">
    <property type="term" value="F:NADP+ binding"/>
    <property type="evidence" value="ECO:0007669"/>
    <property type="project" value="UniProtKB-UniRule"/>
</dbReference>
<dbReference type="GO" id="GO:0042351">
    <property type="term" value="P:'de novo' GDP-L-fucose biosynthetic process"/>
    <property type="evidence" value="ECO:0007669"/>
    <property type="project" value="UniProtKB-UniPathway"/>
</dbReference>
<dbReference type="CDD" id="cd05260">
    <property type="entry name" value="GDP_MD_SDR_e"/>
    <property type="match status" value="1"/>
</dbReference>
<dbReference type="FunFam" id="3.40.50.720:FF:000924">
    <property type="entry name" value="GDP-mannose 4,6 dehydratase"/>
    <property type="match status" value="1"/>
</dbReference>
<dbReference type="Gene3D" id="3.40.50.720">
    <property type="entry name" value="NAD(P)-binding Rossmann-like Domain"/>
    <property type="match status" value="1"/>
</dbReference>
<dbReference type="Gene3D" id="3.90.25.10">
    <property type="entry name" value="UDP-galactose 4-epimerase, domain 1"/>
    <property type="match status" value="1"/>
</dbReference>
<dbReference type="HAMAP" id="MF_00955">
    <property type="entry name" value="GDP_Man_dehydratase"/>
    <property type="match status" value="1"/>
</dbReference>
<dbReference type="InterPro" id="IPR006368">
    <property type="entry name" value="GDP_Man_deHydtase"/>
</dbReference>
<dbReference type="InterPro" id="IPR016040">
    <property type="entry name" value="NAD(P)-bd_dom"/>
</dbReference>
<dbReference type="InterPro" id="IPR036291">
    <property type="entry name" value="NAD(P)-bd_dom_sf"/>
</dbReference>
<dbReference type="NCBIfam" id="TIGR01472">
    <property type="entry name" value="gmd"/>
    <property type="match status" value="1"/>
</dbReference>
<dbReference type="PANTHER" id="PTHR43715:SF1">
    <property type="entry name" value="GDP-MANNOSE 4,6 DEHYDRATASE"/>
    <property type="match status" value="1"/>
</dbReference>
<dbReference type="PANTHER" id="PTHR43715">
    <property type="entry name" value="GDP-MANNOSE 4,6-DEHYDRATASE"/>
    <property type="match status" value="1"/>
</dbReference>
<dbReference type="Pfam" id="PF16363">
    <property type="entry name" value="GDP_Man_Dehyd"/>
    <property type="match status" value="1"/>
</dbReference>
<dbReference type="SUPFAM" id="SSF51735">
    <property type="entry name" value="NAD(P)-binding Rossmann-fold domains"/>
    <property type="match status" value="1"/>
</dbReference>
<accession>P0AC90</accession>
<accession>P32054</accession>
<accession>P77687</accession>
<feature type="chain" id="PRO_0000201713" description="GDP-mannose 4,6-dehydratase">
    <location>
        <begin position="1"/>
        <end position="373"/>
    </location>
</feature>
<feature type="active site" evidence="1">
    <location>
        <position position="133"/>
    </location>
</feature>
<feature type="active site" description="Nucleophile" evidence="1">
    <location>
        <position position="135"/>
    </location>
</feature>
<feature type="active site" description="Nucleophile" evidence="1">
    <location>
        <position position="157"/>
    </location>
</feature>
<feature type="binding site" evidence="1">
    <location>
        <begin position="9"/>
        <end position="14"/>
    </location>
    <ligand>
        <name>NADP(+)</name>
        <dbReference type="ChEBI" id="CHEBI:58349"/>
    </ligand>
</feature>
<feature type="binding site" evidence="1">
    <location>
        <begin position="64"/>
        <end position="65"/>
    </location>
    <ligand>
        <name>NADP(+)</name>
        <dbReference type="ChEBI" id="CHEBI:58349"/>
    </ligand>
</feature>
<feature type="binding site" evidence="1">
    <location>
        <begin position="86"/>
        <end position="90"/>
    </location>
    <ligand>
        <name>NADP(+)</name>
        <dbReference type="ChEBI" id="CHEBI:58349"/>
    </ligand>
</feature>
<feature type="binding site" evidence="1">
    <location>
        <position position="101"/>
    </location>
    <ligand>
        <name>NADP(+)</name>
        <dbReference type="ChEBI" id="CHEBI:58349"/>
    </ligand>
</feature>
<feature type="binding site" evidence="1">
    <location>
        <position position="161"/>
    </location>
    <ligand>
        <name>NADP(+)</name>
        <dbReference type="ChEBI" id="CHEBI:58349"/>
    </ligand>
</feature>
<feature type="binding site" evidence="1">
    <location>
        <position position="187"/>
    </location>
    <ligand>
        <name>NADP(+)</name>
        <dbReference type="ChEBI" id="CHEBI:58349"/>
    </ligand>
</feature>
<feature type="binding site" evidence="1">
    <location>
        <position position="192"/>
    </location>
    <ligand>
        <name>NADP(+)</name>
        <dbReference type="ChEBI" id="CHEBI:58349"/>
    </ligand>
</feature>
<comment type="function">
    <text evidence="1">Catalyzes the conversion of GDP-D-mannose to GDP-4-dehydro-6-deoxy-D-mannose.</text>
</comment>
<comment type="catalytic activity">
    <reaction evidence="1">
        <text>GDP-alpha-D-mannose = GDP-4-dehydro-alpha-D-rhamnose + H2O</text>
        <dbReference type="Rhea" id="RHEA:23820"/>
        <dbReference type="ChEBI" id="CHEBI:15377"/>
        <dbReference type="ChEBI" id="CHEBI:57527"/>
        <dbReference type="ChEBI" id="CHEBI:57964"/>
        <dbReference type="EC" id="4.2.1.47"/>
    </reaction>
</comment>
<comment type="cofactor">
    <cofactor evidence="1">
        <name>NADP(+)</name>
        <dbReference type="ChEBI" id="CHEBI:58349"/>
    </cofactor>
</comment>
<comment type="pathway">
    <text>Nucleotide-sugar biosynthesis; GDP-L-fucose biosynthesis via de novo pathway; GDP-L-fucose from GDP-alpha-D-mannose: step 1/2.</text>
</comment>
<comment type="similarity">
    <text evidence="1">Belongs to the NAD(P)-dependent epimerase/dehydratase family. GDP-mannose 4,6-dehydratase subfamily.</text>
</comment>
<name>GM4D_ECO57</name>
<gene>
    <name evidence="1" type="primary">gmd</name>
    <name type="ordered locus">Z3217</name>
    <name type="ordered locus">ECs2858</name>
</gene>
<sequence>MSKVALITGVTGQDGSYLAEFLLEKGYEVHGIKRRASSFNTERVDHIYQDPHTCNPKFHLHYGDLSDTSNLTRILREVQPDEVYNLGAMSHVAVSFESPEYTADVDAMGTLRLLEAIRFLGLEKKTRFYQASTSELYGLVQEIPQKETTPFYPRSPYAVAKLYAYWITVNYRESYGMYACNGILFNHESPRRGETFVTRKITRAIANIAQGLESCLYLGNMDSLRDWGHAKDYVKMQWMMLQQEQPEDFVIATGVQYSVRQFVEMAAAQLGIKLRFEGTGVEEKGIVVSVTGHDAPGVKPGDVIIAVDPRYFRPAEVETLLGDPTKAHEKLGWKPEITLREMVSEMVANDLEAAKKHSLLKSHGYDVAIALES</sequence>
<organism>
    <name type="scientific">Escherichia coli O157:H7</name>
    <dbReference type="NCBI Taxonomy" id="83334"/>
    <lineage>
        <taxon>Bacteria</taxon>
        <taxon>Pseudomonadati</taxon>
        <taxon>Pseudomonadota</taxon>
        <taxon>Gammaproteobacteria</taxon>
        <taxon>Enterobacterales</taxon>
        <taxon>Enterobacteriaceae</taxon>
        <taxon>Escherichia</taxon>
    </lineage>
</organism>
<keyword id="KW-0456">Lyase</keyword>
<keyword id="KW-0521">NADP</keyword>
<keyword id="KW-1185">Reference proteome</keyword>
<evidence type="ECO:0000255" key="1">
    <source>
        <dbReference type="HAMAP-Rule" id="MF_00955"/>
    </source>
</evidence>